<proteinExistence type="inferred from homology"/>
<accession>A5G0Y2</accession>
<reference key="1">
    <citation type="submission" date="2007-05" db="EMBL/GenBank/DDBJ databases">
        <title>Complete sequence of chromosome of Acidiphilium cryptum JF-5.</title>
        <authorList>
            <consortium name="US DOE Joint Genome Institute"/>
            <person name="Copeland A."/>
            <person name="Lucas S."/>
            <person name="Lapidus A."/>
            <person name="Barry K."/>
            <person name="Detter J.C."/>
            <person name="Glavina del Rio T."/>
            <person name="Hammon N."/>
            <person name="Israni S."/>
            <person name="Dalin E."/>
            <person name="Tice H."/>
            <person name="Pitluck S."/>
            <person name="Sims D."/>
            <person name="Brettin T."/>
            <person name="Bruce D."/>
            <person name="Han C."/>
            <person name="Schmutz J."/>
            <person name="Larimer F."/>
            <person name="Land M."/>
            <person name="Hauser L."/>
            <person name="Kyrpides N."/>
            <person name="Kim E."/>
            <person name="Magnuson T."/>
            <person name="Richardson P."/>
        </authorList>
    </citation>
    <scope>NUCLEOTIDE SEQUENCE [LARGE SCALE GENOMIC DNA]</scope>
    <source>
        <strain>JF-5</strain>
    </source>
</reference>
<evidence type="ECO:0000255" key="1">
    <source>
        <dbReference type="HAMAP-Rule" id="MF_01671"/>
    </source>
</evidence>
<dbReference type="EC" id="1.1.1.18" evidence="1"/>
<dbReference type="EMBL" id="CP000697">
    <property type="protein sequence ID" value="ABQ31514.1"/>
    <property type="molecule type" value="Genomic_DNA"/>
</dbReference>
<dbReference type="RefSeq" id="WP_012039964.1">
    <property type="nucleotide sequence ID" value="NC_009484.1"/>
</dbReference>
<dbReference type="SMR" id="A5G0Y2"/>
<dbReference type="STRING" id="349163.Acry_2320"/>
<dbReference type="KEGG" id="acr:Acry_2320"/>
<dbReference type="eggNOG" id="COG0673">
    <property type="taxonomic scope" value="Bacteria"/>
</dbReference>
<dbReference type="HOGENOM" id="CLU_023194_0_1_5"/>
<dbReference type="Proteomes" id="UP000000245">
    <property type="component" value="Chromosome"/>
</dbReference>
<dbReference type="GO" id="GO:0050112">
    <property type="term" value="F:inositol 2-dehydrogenase (NAD+) activity"/>
    <property type="evidence" value="ECO:0007669"/>
    <property type="project" value="UniProtKB-UniRule"/>
</dbReference>
<dbReference type="GO" id="GO:0000166">
    <property type="term" value="F:nucleotide binding"/>
    <property type="evidence" value="ECO:0007669"/>
    <property type="project" value="InterPro"/>
</dbReference>
<dbReference type="GO" id="GO:0019310">
    <property type="term" value="P:inositol catabolic process"/>
    <property type="evidence" value="ECO:0007669"/>
    <property type="project" value="UniProtKB-UniRule"/>
</dbReference>
<dbReference type="Gene3D" id="3.30.360.10">
    <property type="entry name" value="Dihydrodipicolinate Reductase, domain 2"/>
    <property type="match status" value="1"/>
</dbReference>
<dbReference type="Gene3D" id="3.40.50.720">
    <property type="entry name" value="NAD(P)-binding Rossmann-like Domain"/>
    <property type="match status" value="1"/>
</dbReference>
<dbReference type="HAMAP" id="MF_01671">
    <property type="entry name" value="IolG"/>
    <property type="match status" value="1"/>
</dbReference>
<dbReference type="InterPro" id="IPR050424">
    <property type="entry name" value="Gfo-Idh-MocA_inositol_DH"/>
</dbReference>
<dbReference type="InterPro" id="IPR004104">
    <property type="entry name" value="Gfo/Idh/MocA-like_OxRdtase_C"/>
</dbReference>
<dbReference type="InterPro" id="IPR000683">
    <property type="entry name" value="Gfo/Idh/MocA-like_OxRdtase_N"/>
</dbReference>
<dbReference type="InterPro" id="IPR023794">
    <property type="entry name" value="MI/DCI_dehydrogenase"/>
</dbReference>
<dbReference type="InterPro" id="IPR036291">
    <property type="entry name" value="NAD(P)-bd_dom_sf"/>
</dbReference>
<dbReference type="PANTHER" id="PTHR43593">
    <property type="match status" value="1"/>
</dbReference>
<dbReference type="PANTHER" id="PTHR43593:SF1">
    <property type="entry name" value="INOSITOL 2-DEHYDROGENASE"/>
    <property type="match status" value="1"/>
</dbReference>
<dbReference type="Pfam" id="PF01408">
    <property type="entry name" value="GFO_IDH_MocA"/>
    <property type="match status" value="1"/>
</dbReference>
<dbReference type="Pfam" id="PF02894">
    <property type="entry name" value="GFO_IDH_MocA_C"/>
    <property type="match status" value="1"/>
</dbReference>
<dbReference type="SUPFAM" id="SSF55347">
    <property type="entry name" value="Glyceraldehyde-3-phosphate dehydrogenase-like, C-terminal domain"/>
    <property type="match status" value="1"/>
</dbReference>
<dbReference type="SUPFAM" id="SSF51735">
    <property type="entry name" value="NAD(P)-binding Rossmann-fold domains"/>
    <property type="match status" value="1"/>
</dbReference>
<organism>
    <name type="scientific">Acidiphilium cryptum (strain JF-5)</name>
    <dbReference type="NCBI Taxonomy" id="349163"/>
    <lineage>
        <taxon>Bacteria</taxon>
        <taxon>Pseudomonadati</taxon>
        <taxon>Pseudomonadota</taxon>
        <taxon>Alphaproteobacteria</taxon>
        <taxon>Acetobacterales</taxon>
        <taxon>Acidocellaceae</taxon>
        <taxon>Acidiphilium</taxon>
    </lineage>
</organism>
<sequence>MTLRIGVIGTGAIGRDHMRRINQTLSGAKVTAVSDVNIESVRTARADLAPEAEVVGSGEEVAASAGVDAVVVTSWGATHEQYVLAAIAAGKPVFCEKPLSTTAAGAGRIVEAETAFGRRLVQVGFMRRYDAGYRMLKAVVENEIGRPLMVHAAHRNPSVPEQYITPMAIQDTLIHEIDVLRWLLDDDYVSAQVISPRRTRHAHARVEDPQIVLLETKSGIRIDVEIFVNCRYGYDIQCQVVGEEGLASLPDPMAVVMRKDAKLQSAIMTDWKDRFIDSYDLELQDFIKAAARGTASGPTAWDGYVAAVSSDACVEAQSRPGSIVPISLPARPPLYN</sequence>
<name>IOLG_ACICJ</name>
<keyword id="KW-0520">NAD</keyword>
<keyword id="KW-0560">Oxidoreductase</keyword>
<keyword id="KW-1185">Reference proteome</keyword>
<comment type="function">
    <text evidence="1">Involved in the oxidation of myo-inositol (MI) to 2-keto-myo-inositol (2KMI or 2-inosose).</text>
</comment>
<comment type="catalytic activity">
    <reaction evidence="1">
        <text>myo-inositol + NAD(+) = scyllo-inosose + NADH + H(+)</text>
        <dbReference type="Rhea" id="RHEA:16949"/>
        <dbReference type="ChEBI" id="CHEBI:15378"/>
        <dbReference type="ChEBI" id="CHEBI:17268"/>
        <dbReference type="ChEBI" id="CHEBI:17811"/>
        <dbReference type="ChEBI" id="CHEBI:57540"/>
        <dbReference type="ChEBI" id="CHEBI:57945"/>
        <dbReference type="EC" id="1.1.1.18"/>
    </reaction>
</comment>
<comment type="subunit">
    <text evidence="1">Homotetramer.</text>
</comment>
<comment type="similarity">
    <text evidence="1">Belongs to the Gfo/Idh/MocA family.</text>
</comment>
<protein>
    <recommendedName>
        <fullName evidence="1">Inositol 2-dehydrogenase</fullName>
        <ecNumber evidence="1">1.1.1.18</ecNumber>
    </recommendedName>
    <alternativeName>
        <fullName evidence="1">Myo-inositol 2-dehydrogenase</fullName>
        <shortName evidence="1">MI 2-dehydrogenase</shortName>
    </alternativeName>
</protein>
<feature type="chain" id="PRO_0000352548" description="Inositol 2-dehydrogenase">
    <location>
        <begin position="1"/>
        <end position="336"/>
    </location>
</feature>
<gene>
    <name evidence="1" type="primary">iolG</name>
    <name type="ordered locus">Acry_2320</name>
</gene>